<evidence type="ECO:0000255" key="1">
    <source>
        <dbReference type="HAMAP-Rule" id="MF_00073"/>
    </source>
</evidence>
<organism>
    <name type="scientific">Staphylococcus epidermidis (strain ATCC 35984 / DSM 28319 / BCRC 17069 / CCUG 31568 / BM 3577 / RP62A)</name>
    <dbReference type="NCBI Taxonomy" id="176279"/>
    <lineage>
        <taxon>Bacteria</taxon>
        <taxon>Bacillati</taxon>
        <taxon>Bacillota</taxon>
        <taxon>Bacilli</taxon>
        <taxon>Bacillales</taxon>
        <taxon>Staphylococcaceae</taxon>
        <taxon>Staphylococcus</taxon>
    </lineage>
</organism>
<sequence>MSRKDARVQAFQTLFQLEIKETDLTIQEAIEFIKDDHSDLDFDFIYWLVTGVKDHQIVLDETIKPHLKDWSIDRLLKSDRIILRMATFEILHSDTPKKVVVNEAVELTKQFSDDDHYKFVNGVLSNIND</sequence>
<reference key="1">
    <citation type="journal article" date="2005" name="J. Bacteriol.">
        <title>Insights on evolution of virulence and resistance from the complete genome analysis of an early methicillin-resistant Staphylococcus aureus strain and a biofilm-producing methicillin-resistant Staphylococcus epidermidis strain.</title>
        <authorList>
            <person name="Gill S.R."/>
            <person name="Fouts D.E."/>
            <person name="Archer G.L."/>
            <person name="Mongodin E.F."/>
            <person name="DeBoy R.T."/>
            <person name="Ravel J."/>
            <person name="Paulsen I.T."/>
            <person name="Kolonay J.F."/>
            <person name="Brinkac L.M."/>
            <person name="Beanan M.J."/>
            <person name="Dodson R.J."/>
            <person name="Daugherty S.C."/>
            <person name="Madupu R."/>
            <person name="Angiuoli S.V."/>
            <person name="Durkin A.S."/>
            <person name="Haft D.H."/>
            <person name="Vamathevan J.J."/>
            <person name="Khouri H."/>
            <person name="Utterback T.R."/>
            <person name="Lee C."/>
            <person name="Dimitrov G."/>
            <person name="Jiang L."/>
            <person name="Qin H."/>
            <person name="Weidman J."/>
            <person name="Tran K."/>
            <person name="Kang K.H."/>
            <person name="Hance I.R."/>
            <person name="Nelson K.E."/>
            <person name="Fraser C.M."/>
        </authorList>
    </citation>
    <scope>NUCLEOTIDE SEQUENCE [LARGE SCALE GENOMIC DNA]</scope>
    <source>
        <strain>ATCC 35984 / DSM 28319 / BCRC 17069 / CCUG 31568 / BM 3577 / RP62A</strain>
    </source>
</reference>
<dbReference type="EMBL" id="CP000029">
    <property type="protein sequence ID" value="AAW54460.1"/>
    <property type="molecule type" value="Genomic_DNA"/>
</dbReference>
<dbReference type="RefSeq" id="WP_001831090.1">
    <property type="nucleotide sequence ID" value="NC_002976.3"/>
</dbReference>
<dbReference type="SMR" id="Q5HP28"/>
<dbReference type="STRING" id="176279.SERP1085"/>
<dbReference type="GeneID" id="50018677"/>
<dbReference type="KEGG" id="ser:SERP1085"/>
<dbReference type="eggNOG" id="COG0781">
    <property type="taxonomic scope" value="Bacteria"/>
</dbReference>
<dbReference type="HOGENOM" id="CLU_087843_3_3_9"/>
<dbReference type="Proteomes" id="UP000000531">
    <property type="component" value="Chromosome"/>
</dbReference>
<dbReference type="GO" id="GO:0005829">
    <property type="term" value="C:cytosol"/>
    <property type="evidence" value="ECO:0007669"/>
    <property type="project" value="TreeGrafter"/>
</dbReference>
<dbReference type="GO" id="GO:0003723">
    <property type="term" value="F:RNA binding"/>
    <property type="evidence" value="ECO:0007669"/>
    <property type="project" value="UniProtKB-UniRule"/>
</dbReference>
<dbReference type="GO" id="GO:0006353">
    <property type="term" value="P:DNA-templated transcription termination"/>
    <property type="evidence" value="ECO:0007669"/>
    <property type="project" value="UniProtKB-UniRule"/>
</dbReference>
<dbReference type="GO" id="GO:0031564">
    <property type="term" value="P:transcription antitermination"/>
    <property type="evidence" value="ECO:0007669"/>
    <property type="project" value="UniProtKB-KW"/>
</dbReference>
<dbReference type="Gene3D" id="1.10.940.10">
    <property type="entry name" value="NusB-like"/>
    <property type="match status" value="1"/>
</dbReference>
<dbReference type="HAMAP" id="MF_00073">
    <property type="entry name" value="NusB"/>
    <property type="match status" value="1"/>
</dbReference>
<dbReference type="InterPro" id="IPR035926">
    <property type="entry name" value="NusB-like_sf"/>
</dbReference>
<dbReference type="InterPro" id="IPR011605">
    <property type="entry name" value="NusB_fam"/>
</dbReference>
<dbReference type="InterPro" id="IPR006027">
    <property type="entry name" value="NusB_RsmB_TIM44"/>
</dbReference>
<dbReference type="NCBIfam" id="TIGR01951">
    <property type="entry name" value="nusB"/>
    <property type="match status" value="1"/>
</dbReference>
<dbReference type="PANTHER" id="PTHR11078:SF3">
    <property type="entry name" value="ANTITERMINATION NUSB DOMAIN-CONTAINING PROTEIN"/>
    <property type="match status" value="1"/>
</dbReference>
<dbReference type="PANTHER" id="PTHR11078">
    <property type="entry name" value="N UTILIZATION SUBSTANCE PROTEIN B-RELATED"/>
    <property type="match status" value="1"/>
</dbReference>
<dbReference type="Pfam" id="PF01029">
    <property type="entry name" value="NusB"/>
    <property type="match status" value="1"/>
</dbReference>
<dbReference type="SUPFAM" id="SSF48013">
    <property type="entry name" value="NusB-like"/>
    <property type="match status" value="1"/>
</dbReference>
<proteinExistence type="inferred from homology"/>
<accession>Q5HP28</accession>
<name>NUSB_STAEQ</name>
<comment type="function">
    <text evidence="1">Involved in transcription antitermination. Required for transcription of ribosomal RNA (rRNA) genes. Binds specifically to the boxA antiterminator sequence of the ribosomal RNA (rrn) operons.</text>
</comment>
<comment type="similarity">
    <text evidence="1">Belongs to the NusB family.</text>
</comment>
<feature type="chain" id="PRO_0000176584" description="Transcription antitermination protein NusB">
    <location>
        <begin position="1"/>
        <end position="129"/>
    </location>
</feature>
<protein>
    <recommendedName>
        <fullName evidence="1">Transcription antitermination protein NusB</fullName>
    </recommendedName>
    <alternativeName>
        <fullName evidence="1">Antitermination factor NusB</fullName>
    </alternativeName>
</protein>
<keyword id="KW-1185">Reference proteome</keyword>
<keyword id="KW-0694">RNA-binding</keyword>
<keyword id="KW-0804">Transcription</keyword>
<keyword id="KW-0889">Transcription antitermination</keyword>
<keyword id="KW-0805">Transcription regulation</keyword>
<gene>
    <name evidence="1" type="primary">nusB</name>
    <name type="ordered locus">SERP1085</name>
</gene>